<feature type="chain" id="PRO_1000187226" description="L-rhamnose mutarotase">
    <location>
        <begin position="1"/>
        <end position="104"/>
    </location>
</feature>
<feature type="active site" description="Proton donor" evidence="1">
    <location>
        <position position="22"/>
    </location>
</feature>
<feature type="binding site" evidence="1">
    <location>
        <position position="18"/>
    </location>
    <ligand>
        <name>substrate</name>
    </ligand>
</feature>
<feature type="binding site" evidence="1">
    <location>
        <position position="41"/>
    </location>
    <ligand>
        <name>substrate</name>
    </ligand>
</feature>
<feature type="binding site" evidence="1">
    <location>
        <begin position="76"/>
        <end position="77"/>
    </location>
    <ligand>
        <name>substrate</name>
    </ligand>
</feature>
<accession>B5FP36</accession>
<sequence length="104" mass="12348">MIRKAFVMQVNADAHEEYQRRHNPIWPELEAVLKSHGAHHYAIYLDQERNLLFATVEIESEERWNAVASTDVCQRWWKHMRDVMPANPDNSPISAELKEVFYLQ</sequence>
<organism>
    <name type="scientific">Salmonella dublin (strain CT_02021853)</name>
    <dbReference type="NCBI Taxonomy" id="439851"/>
    <lineage>
        <taxon>Bacteria</taxon>
        <taxon>Pseudomonadati</taxon>
        <taxon>Pseudomonadota</taxon>
        <taxon>Gammaproteobacteria</taxon>
        <taxon>Enterobacterales</taxon>
        <taxon>Enterobacteriaceae</taxon>
        <taxon>Salmonella</taxon>
    </lineage>
</organism>
<keyword id="KW-0119">Carbohydrate metabolism</keyword>
<keyword id="KW-0963">Cytoplasm</keyword>
<keyword id="KW-0413">Isomerase</keyword>
<keyword id="KW-0684">Rhamnose metabolism</keyword>
<comment type="function">
    <text evidence="1">Involved in the anomeric conversion of L-rhamnose.</text>
</comment>
<comment type="catalytic activity">
    <reaction evidence="1">
        <text>alpha-L-rhamnose = beta-L-rhamnose</text>
        <dbReference type="Rhea" id="RHEA:25584"/>
        <dbReference type="ChEBI" id="CHEBI:27586"/>
        <dbReference type="ChEBI" id="CHEBI:27907"/>
        <dbReference type="EC" id="5.1.3.32"/>
    </reaction>
</comment>
<comment type="pathway">
    <text evidence="1">Carbohydrate metabolism; L-rhamnose metabolism.</text>
</comment>
<comment type="subunit">
    <text evidence="1">Homodimer.</text>
</comment>
<comment type="subcellular location">
    <subcellularLocation>
        <location evidence="1">Cytoplasm</location>
    </subcellularLocation>
</comment>
<comment type="similarity">
    <text evidence="1">Belongs to the rhamnose mutarotase family.</text>
</comment>
<evidence type="ECO:0000255" key="1">
    <source>
        <dbReference type="HAMAP-Rule" id="MF_01663"/>
    </source>
</evidence>
<gene>
    <name evidence="1" type="primary">rhaM</name>
    <name type="ordered locus">SeD_A4438</name>
</gene>
<reference key="1">
    <citation type="journal article" date="2011" name="J. Bacteriol.">
        <title>Comparative genomics of 28 Salmonella enterica isolates: evidence for CRISPR-mediated adaptive sublineage evolution.</title>
        <authorList>
            <person name="Fricke W.F."/>
            <person name="Mammel M.K."/>
            <person name="McDermott P.F."/>
            <person name="Tartera C."/>
            <person name="White D.G."/>
            <person name="Leclerc J.E."/>
            <person name="Ravel J."/>
            <person name="Cebula T.A."/>
        </authorList>
    </citation>
    <scope>NUCLEOTIDE SEQUENCE [LARGE SCALE GENOMIC DNA]</scope>
    <source>
        <strain>CT_02021853</strain>
    </source>
</reference>
<protein>
    <recommendedName>
        <fullName evidence="1">L-rhamnose mutarotase</fullName>
        <ecNumber evidence="1">5.1.3.32</ecNumber>
    </recommendedName>
    <alternativeName>
        <fullName evidence="1">Rhamnose 1-epimerase</fullName>
    </alternativeName>
    <alternativeName>
        <fullName evidence="1">Type-3 mutarotase</fullName>
    </alternativeName>
</protein>
<proteinExistence type="inferred from homology"/>
<name>RHAM_SALDC</name>
<dbReference type="EC" id="5.1.3.32" evidence="1"/>
<dbReference type="EMBL" id="CP001144">
    <property type="protein sequence ID" value="ACH76226.1"/>
    <property type="molecule type" value="Genomic_DNA"/>
</dbReference>
<dbReference type="RefSeq" id="WP_000619475.1">
    <property type="nucleotide sequence ID" value="NC_011205.1"/>
</dbReference>
<dbReference type="SMR" id="B5FP36"/>
<dbReference type="KEGG" id="sed:SeD_A4438"/>
<dbReference type="HOGENOM" id="CLU_100689_2_0_6"/>
<dbReference type="UniPathway" id="UPA00125"/>
<dbReference type="Proteomes" id="UP000008322">
    <property type="component" value="Chromosome"/>
</dbReference>
<dbReference type="GO" id="GO:0005737">
    <property type="term" value="C:cytoplasm"/>
    <property type="evidence" value="ECO:0007669"/>
    <property type="project" value="UniProtKB-SubCell"/>
</dbReference>
<dbReference type="GO" id="GO:0062192">
    <property type="term" value="F:L-rhamnose mutarotase activity"/>
    <property type="evidence" value="ECO:0007669"/>
    <property type="project" value="UniProtKB-EC"/>
</dbReference>
<dbReference type="GO" id="GO:0019301">
    <property type="term" value="P:rhamnose catabolic process"/>
    <property type="evidence" value="ECO:0007669"/>
    <property type="project" value="TreeGrafter"/>
</dbReference>
<dbReference type="Gene3D" id="3.30.70.100">
    <property type="match status" value="1"/>
</dbReference>
<dbReference type="HAMAP" id="MF_01663">
    <property type="entry name" value="L_rham_rotase"/>
    <property type="match status" value="1"/>
</dbReference>
<dbReference type="InterPro" id="IPR011008">
    <property type="entry name" value="Dimeric_a/b-barrel"/>
</dbReference>
<dbReference type="InterPro" id="IPR013448">
    <property type="entry name" value="L-rhamnose_mutarotase"/>
</dbReference>
<dbReference type="InterPro" id="IPR008000">
    <property type="entry name" value="Rham/fucose_mutarotase"/>
</dbReference>
<dbReference type="NCBIfam" id="TIGR02625">
    <property type="entry name" value="YiiL_rotase"/>
    <property type="match status" value="1"/>
</dbReference>
<dbReference type="PANTHER" id="PTHR34389">
    <property type="entry name" value="L-RHAMNOSE MUTAROTASE"/>
    <property type="match status" value="1"/>
</dbReference>
<dbReference type="PANTHER" id="PTHR34389:SF2">
    <property type="entry name" value="L-RHAMNOSE MUTAROTASE"/>
    <property type="match status" value="1"/>
</dbReference>
<dbReference type="Pfam" id="PF05336">
    <property type="entry name" value="rhaM"/>
    <property type="match status" value="1"/>
</dbReference>
<dbReference type="SUPFAM" id="SSF54909">
    <property type="entry name" value="Dimeric alpha+beta barrel"/>
    <property type="match status" value="1"/>
</dbReference>